<organism>
    <name type="scientific">Xanthomonas oryzae pv. oryzae (strain PXO99A)</name>
    <dbReference type="NCBI Taxonomy" id="360094"/>
    <lineage>
        <taxon>Bacteria</taxon>
        <taxon>Pseudomonadati</taxon>
        <taxon>Pseudomonadota</taxon>
        <taxon>Gammaproteobacteria</taxon>
        <taxon>Lysobacterales</taxon>
        <taxon>Lysobacteraceae</taxon>
        <taxon>Xanthomonas</taxon>
    </lineage>
</organism>
<reference key="1">
    <citation type="journal article" date="2008" name="BMC Genomics">
        <title>Genome sequence and rapid evolution of the rice pathogen Xanthomonas oryzae pv. oryzae PXO99A.</title>
        <authorList>
            <person name="Salzberg S.L."/>
            <person name="Sommer D.D."/>
            <person name="Schatz M.C."/>
            <person name="Phillippy A.M."/>
            <person name="Rabinowicz P.D."/>
            <person name="Tsuge S."/>
            <person name="Furutani A."/>
            <person name="Ochiai H."/>
            <person name="Delcher A.L."/>
            <person name="Kelley D."/>
            <person name="Madupu R."/>
            <person name="Puiu D."/>
            <person name="Radune D."/>
            <person name="Shumway M."/>
            <person name="Trapnell C."/>
            <person name="Aparna G."/>
            <person name="Jha G."/>
            <person name="Pandey A."/>
            <person name="Patil P.B."/>
            <person name="Ishihara H."/>
            <person name="Meyer D.F."/>
            <person name="Szurek B."/>
            <person name="Verdier V."/>
            <person name="Koebnik R."/>
            <person name="Dow J.M."/>
            <person name="Ryan R.P."/>
            <person name="Hirata H."/>
            <person name="Tsuyumu S."/>
            <person name="Won Lee S."/>
            <person name="Seo Y.-S."/>
            <person name="Sriariyanum M."/>
            <person name="Ronald P.C."/>
            <person name="Sonti R.V."/>
            <person name="Van Sluys M.-A."/>
            <person name="Leach J.E."/>
            <person name="White F.F."/>
            <person name="Bogdanove A.J."/>
        </authorList>
    </citation>
    <scope>NUCLEOTIDE SEQUENCE [LARGE SCALE GENOMIC DNA]</scope>
    <source>
        <strain>PXO99A</strain>
    </source>
</reference>
<name>LGT_XANOP</name>
<accession>B2SPS7</accession>
<sequence length="296" mass="32670">MIYLHAIDPIAFSLGPVKVHWYGLMYLAAFFSAWSLGRSRILRGRLPGVDMDGFSDLLFYGMLGVVLGGRIGYMLFYAFETFVANPLILFKVWEGGMSFHGGLLGVLVACWLWARKHRLHFFDVMDFVAPLVPLGLGFGRLGNFVGGELWGKFTQAGWGVIFPHAPELADQLPAQIQAQYAAGALNQLARHPSQLYEAALEGVVMFVVLWTFSMKPRARYALSGLFALLYGVFRFIVEFVRVPDAPIGYLAFNWLTMGQILSLPLIAVGLALLAMSRRAPVLQPVLPTPAGVEAAK</sequence>
<feature type="chain" id="PRO_1000137473" description="Phosphatidylglycerol--prolipoprotein diacylglyceryl transferase">
    <location>
        <begin position="1"/>
        <end position="296"/>
    </location>
</feature>
<feature type="transmembrane region" description="Helical" evidence="1">
    <location>
        <begin position="10"/>
        <end position="30"/>
    </location>
</feature>
<feature type="transmembrane region" description="Helical" evidence="1">
    <location>
        <begin position="57"/>
        <end position="77"/>
    </location>
</feature>
<feature type="transmembrane region" description="Helical" evidence="1">
    <location>
        <begin position="92"/>
        <end position="112"/>
    </location>
</feature>
<feature type="transmembrane region" description="Helical" evidence="1">
    <location>
        <begin position="119"/>
        <end position="139"/>
    </location>
</feature>
<feature type="transmembrane region" description="Helical" evidence="1">
    <location>
        <begin position="194"/>
        <end position="214"/>
    </location>
</feature>
<feature type="transmembrane region" description="Helical" evidence="1">
    <location>
        <begin position="220"/>
        <end position="240"/>
    </location>
</feature>
<feature type="transmembrane region" description="Helical" evidence="1">
    <location>
        <begin position="254"/>
        <end position="274"/>
    </location>
</feature>
<feature type="binding site" evidence="1">
    <location>
        <position position="140"/>
    </location>
    <ligand>
        <name>a 1,2-diacyl-sn-glycero-3-phospho-(1'-sn-glycerol)</name>
        <dbReference type="ChEBI" id="CHEBI:64716"/>
    </ligand>
</feature>
<keyword id="KW-0997">Cell inner membrane</keyword>
<keyword id="KW-1003">Cell membrane</keyword>
<keyword id="KW-0472">Membrane</keyword>
<keyword id="KW-0808">Transferase</keyword>
<keyword id="KW-0812">Transmembrane</keyword>
<keyword id="KW-1133">Transmembrane helix</keyword>
<evidence type="ECO:0000255" key="1">
    <source>
        <dbReference type="HAMAP-Rule" id="MF_01147"/>
    </source>
</evidence>
<gene>
    <name evidence="1" type="primary">lgt</name>
    <name type="ordered locus">PXO_04650</name>
</gene>
<protein>
    <recommendedName>
        <fullName evidence="1">Phosphatidylglycerol--prolipoprotein diacylglyceryl transferase</fullName>
        <ecNumber evidence="1">2.5.1.145</ecNumber>
    </recommendedName>
</protein>
<comment type="function">
    <text evidence="1">Catalyzes the transfer of the diacylglyceryl group from phosphatidylglycerol to the sulfhydryl group of the N-terminal cysteine of a prolipoprotein, the first step in the formation of mature lipoproteins.</text>
</comment>
<comment type="catalytic activity">
    <reaction evidence="1">
        <text>L-cysteinyl-[prolipoprotein] + a 1,2-diacyl-sn-glycero-3-phospho-(1'-sn-glycerol) = an S-1,2-diacyl-sn-glyceryl-L-cysteinyl-[prolipoprotein] + sn-glycerol 1-phosphate + H(+)</text>
        <dbReference type="Rhea" id="RHEA:56712"/>
        <dbReference type="Rhea" id="RHEA-COMP:14679"/>
        <dbReference type="Rhea" id="RHEA-COMP:14680"/>
        <dbReference type="ChEBI" id="CHEBI:15378"/>
        <dbReference type="ChEBI" id="CHEBI:29950"/>
        <dbReference type="ChEBI" id="CHEBI:57685"/>
        <dbReference type="ChEBI" id="CHEBI:64716"/>
        <dbReference type="ChEBI" id="CHEBI:140658"/>
        <dbReference type="EC" id="2.5.1.145"/>
    </reaction>
</comment>
<comment type="pathway">
    <text evidence="1">Protein modification; lipoprotein biosynthesis (diacylglyceryl transfer).</text>
</comment>
<comment type="subcellular location">
    <subcellularLocation>
        <location evidence="1">Cell inner membrane</location>
        <topology evidence="1">Multi-pass membrane protein</topology>
    </subcellularLocation>
</comment>
<comment type="similarity">
    <text evidence="1">Belongs to the Lgt family.</text>
</comment>
<proteinExistence type="inferred from homology"/>
<dbReference type="EC" id="2.5.1.145" evidence="1"/>
<dbReference type="EMBL" id="CP000967">
    <property type="protein sequence ID" value="ACD57764.1"/>
    <property type="molecule type" value="Genomic_DNA"/>
</dbReference>
<dbReference type="RefSeq" id="WP_011260173.1">
    <property type="nucleotide sequence ID" value="NC_010717.2"/>
</dbReference>
<dbReference type="SMR" id="B2SPS7"/>
<dbReference type="KEGG" id="xop:PXO_04650"/>
<dbReference type="eggNOG" id="COG0682">
    <property type="taxonomic scope" value="Bacteria"/>
</dbReference>
<dbReference type="HOGENOM" id="CLU_013386_1_0_6"/>
<dbReference type="UniPathway" id="UPA00664"/>
<dbReference type="Proteomes" id="UP000001740">
    <property type="component" value="Chromosome"/>
</dbReference>
<dbReference type="GO" id="GO:0005886">
    <property type="term" value="C:plasma membrane"/>
    <property type="evidence" value="ECO:0007669"/>
    <property type="project" value="UniProtKB-SubCell"/>
</dbReference>
<dbReference type="GO" id="GO:0008961">
    <property type="term" value="F:phosphatidylglycerol-prolipoprotein diacylglyceryl transferase activity"/>
    <property type="evidence" value="ECO:0007669"/>
    <property type="project" value="UniProtKB-UniRule"/>
</dbReference>
<dbReference type="GO" id="GO:0042158">
    <property type="term" value="P:lipoprotein biosynthetic process"/>
    <property type="evidence" value="ECO:0007669"/>
    <property type="project" value="UniProtKB-UniRule"/>
</dbReference>
<dbReference type="HAMAP" id="MF_01147">
    <property type="entry name" value="Lgt"/>
    <property type="match status" value="1"/>
</dbReference>
<dbReference type="InterPro" id="IPR001640">
    <property type="entry name" value="Lgt"/>
</dbReference>
<dbReference type="NCBIfam" id="TIGR00544">
    <property type="entry name" value="lgt"/>
    <property type="match status" value="1"/>
</dbReference>
<dbReference type="PANTHER" id="PTHR30589:SF0">
    <property type="entry name" value="PHOSPHATIDYLGLYCEROL--PROLIPOPROTEIN DIACYLGLYCERYL TRANSFERASE"/>
    <property type="match status" value="1"/>
</dbReference>
<dbReference type="PANTHER" id="PTHR30589">
    <property type="entry name" value="PROLIPOPROTEIN DIACYLGLYCERYL TRANSFERASE"/>
    <property type="match status" value="1"/>
</dbReference>
<dbReference type="Pfam" id="PF01790">
    <property type="entry name" value="LGT"/>
    <property type="match status" value="1"/>
</dbReference>
<dbReference type="PROSITE" id="PS01311">
    <property type="entry name" value="LGT"/>
    <property type="match status" value="1"/>
</dbReference>